<feature type="chain" id="PRO_0000070420" description="Ribosomal RNA large subunit methyltransferase M">
    <location>
        <begin position="1"/>
        <end position="357"/>
    </location>
</feature>
<feature type="active site" description="Proton acceptor" evidence="1">
    <location>
        <position position="300"/>
    </location>
</feature>
<feature type="binding site" evidence="1">
    <location>
        <position position="183"/>
    </location>
    <ligand>
        <name>S-adenosyl-L-methionine</name>
        <dbReference type="ChEBI" id="CHEBI:59789"/>
    </ligand>
</feature>
<feature type="binding site" evidence="1">
    <location>
        <begin position="216"/>
        <end position="219"/>
    </location>
    <ligand>
        <name>S-adenosyl-L-methionine</name>
        <dbReference type="ChEBI" id="CHEBI:59789"/>
    </ligand>
</feature>
<feature type="binding site" evidence="1">
    <location>
        <position position="235"/>
    </location>
    <ligand>
        <name>S-adenosyl-L-methionine</name>
        <dbReference type="ChEBI" id="CHEBI:59789"/>
    </ligand>
</feature>
<feature type="binding site" evidence="1">
    <location>
        <position position="255"/>
    </location>
    <ligand>
        <name>S-adenosyl-L-methionine</name>
        <dbReference type="ChEBI" id="CHEBI:59789"/>
    </ligand>
</feature>
<feature type="binding site" evidence="1">
    <location>
        <position position="271"/>
    </location>
    <ligand>
        <name>S-adenosyl-L-methionine</name>
        <dbReference type="ChEBI" id="CHEBI:59789"/>
    </ligand>
</feature>
<dbReference type="EC" id="2.1.1.186" evidence="1"/>
<dbReference type="EMBL" id="CP000075">
    <property type="protein sequence ID" value="AAY38435.1"/>
    <property type="molecule type" value="Genomic_DNA"/>
</dbReference>
<dbReference type="RefSeq" id="WP_011268413.1">
    <property type="nucleotide sequence ID" value="NC_007005.1"/>
</dbReference>
<dbReference type="RefSeq" id="YP_236473.1">
    <property type="nucleotide sequence ID" value="NC_007005.1"/>
</dbReference>
<dbReference type="SMR" id="Q4ZQY7"/>
<dbReference type="STRING" id="205918.Psyr_3403"/>
<dbReference type="KEGG" id="psb:Psyr_3403"/>
<dbReference type="PATRIC" id="fig|205918.7.peg.3485"/>
<dbReference type="eggNOG" id="COG2933">
    <property type="taxonomic scope" value="Bacteria"/>
</dbReference>
<dbReference type="HOGENOM" id="CLU_043780_0_0_6"/>
<dbReference type="OrthoDB" id="154490at2"/>
<dbReference type="Proteomes" id="UP000000426">
    <property type="component" value="Chromosome"/>
</dbReference>
<dbReference type="GO" id="GO:0005737">
    <property type="term" value="C:cytoplasm"/>
    <property type="evidence" value="ECO:0007669"/>
    <property type="project" value="UniProtKB-SubCell"/>
</dbReference>
<dbReference type="GO" id="GO:0008757">
    <property type="term" value="F:S-adenosylmethionine-dependent methyltransferase activity"/>
    <property type="evidence" value="ECO:0007669"/>
    <property type="project" value="UniProtKB-UniRule"/>
</dbReference>
<dbReference type="GO" id="GO:0032259">
    <property type="term" value="P:methylation"/>
    <property type="evidence" value="ECO:0007669"/>
    <property type="project" value="UniProtKB-KW"/>
</dbReference>
<dbReference type="GO" id="GO:0006364">
    <property type="term" value="P:rRNA processing"/>
    <property type="evidence" value="ECO:0007669"/>
    <property type="project" value="UniProtKB-UniRule"/>
</dbReference>
<dbReference type="Gene3D" id="3.30.2300.20">
    <property type="match status" value="1"/>
</dbReference>
<dbReference type="Gene3D" id="3.30.70.2810">
    <property type="match status" value="1"/>
</dbReference>
<dbReference type="Gene3D" id="3.40.50.150">
    <property type="entry name" value="Vaccinia Virus protein VP39"/>
    <property type="match status" value="1"/>
</dbReference>
<dbReference type="HAMAP" id="MF_01551">
    <property type="entry name" value="23SrRNA_methyltr_M"/>
    <property type="match status" value="1"/>
</dbReference>
<dbReference type="InterPro" id="IPR040739">
    <property type="entry name" value="RlmM_FDX"/>
</dbReference>
<dbReference type="InterPro" id="IPR048646">
    <property type="entry name" value="RlmM_THUMP-like"/>
</dbReference>
<dbReference type="InterPro" id="IPR002877">
    <property type="entry name" value="RNA_MeTrfase_FtsJ_dom"/>
</dbReference>
<dbReference type="InterPro" id="IPR011224">
    <property type="entry name" value="rRNA_MeTrfase_M"/>
</dbReference>
<dbReference type="InterPro" id="IPR029063">
    <property type="entry name" value="SAM-dependent_MTases_sf"/>
</dbReference>
<dbReference type="NCBIfam" id="NF008734">
    <property type="entry name" value="PRK11760.1"/>
    <property type="match status" value="1"/>
</dbReference>
<dbReference type="PANTHER" id="PTHR37524">
    <property type="entry name" value="RIBOSOMAL RNA LARGE SUBUNIT METHYLTRANSFERASE M"/>
    <property type="match status" value="1"/>
</dbReference>
<dbReference type="PANTHER" id="PTHR37524:SF2">
    <property type="entry name" value="RIBOSOMAL RNA METHYLTRANSFERASE FTSJ DOMAIN-CONTAINING PROTEIN"/>
    <property type="match status" value="1"/>
</dbReference>
<dbReference type="Pfam" id="PF01728">
    <property type="entry name" value="FtsJ"/>
    <property type="match status" value="1"/>
</dbReference>
<dbReference type="Pfam" id="PF18125">
    <property type="entry name" value="RlmM_FDX"/>
    <property type="match status" value="1"/>
</dbReference>
<dbReference type="Pfam" id="PF21239">
    <property type="entry name" value="RLMM_N"/>
    <property type="match status" value="1"/>
</dbReference>
<dbReference type="PIRSF" id="PIRSF028774">
    <property type="entry name" value="UCP028774"/>
    <property type="match status" value="1"/>
</dbReference>
<dbReference type="SUPFAM" id="SSF53335">
    <property type="entry name" value="S-adenosyl-L-methionine-dependent methyltransferases"/>
    <property type="match status" value="1"/>
</dbReference>
<evidence type="ECO:0000255" key="1">
    <source>
        <dbReference type="HAMAP-Rule" id="MF_01551"/>
    </source>
</evidence>
<accession>Q4ZQY7</accession>
<protein>
    <recommendedName>
        <fullName evidence="1">Ribosomal RNA large subunit methyltransferase M</fullName>
        <ecNumber evidence="1">2.1.1.186</ecNumber>
    </recommendedName>
    <alternativeName>
        <fullName evidence="1">23S rRNA (cytidine2498-2'-O)-methyltransferase</fullName>
    </alternativeName>
    <alternativeName>
        <fullName evidence="1">23S rRNA 2'-O-ribose methyltransferase RlmM</fullName>
    </alternativeName>
</protein>
<keyword id="KW-0963">Cytoplasm</keyword>
<keyword id="KW-0489">Methyltransferase</keyword>
<keyword id="KW-0698">rRNA processing</keyword>
<keyword id="KW-0949">S-adenosyl-L-methionine</keyword>
<keyword id="KW-0808">Transferase</keyword>
<proteinExistence type="inferred from homology"/>
<reference key="1">
    <citation type="journal article" date="2005" name="Proc. Natl. Acad. Sci. U.S.A.">
        <title>Comparison of the complete genome sequences of Pseudomonas syringae pv. syringae B728a and pv. tomato DC3000.</title>
        <authorList>
            <person name="Feil H."/>
            <person name="Feil W.S."/>
            <person name="Chain P."/>
            <person name="Larimer F."/>
            <person name="Dibartolo G."/>
            <person name="Copeland A."/>
            <person name="Lykidis A."/>
            <person name="Trong S."/>
            <person name="Nolan M."/>
            <person name="Goltsman E."/>
            <person name="Thiel J."/>
            <person name="Malfatti S."/>
            <person name="Loper J.E."/>
            <person name="Lapidus A."/>
            <person name="Detter J.C."/>
            <person name="Land M."/>
            <person name="Richardson P.M."/>
            <person name="Kyrpides N.C."/>
            <person name="Ivanova N."/>
            <person name="Lindow S.E."/>
        </authorList>
    </citation>
    <scope>NUCLEOTIDE SEQUENCE [LARGE SCALE GENOMIC DNA]</scope>
    <source>
        <strain>B728a</strain>
    </source>
</reference>
<organism>
    <name type="scientific">Pseudomonas syringae pv. syringae (strain B728a)</name>
    <dbReference type="NCBI Taxonomy" id="205918"/>
    <lineage>
        <taxon>Bacteria</taxon>
        <taxon>Pseudomonadati</taxon>
        <taxon>Pseudomonadota</taxon>
        <taxon>Gammaproteobacteria</taxon>
        <taxon>Pseudomonadales</taxon>
        <taxon>Pseudomonadaceae</taxon>
        <taxon>Pseudomonas</taxon>
        <taxon>Pseudomonas syringae</taxon>
    </lineage>
</organism>
<name>RLMM_PSEU2</name>
<comment type="function">
    <text evidence="1">Catalyzes the 2'-O-methylation at nucleotide C2498 in 23S rRNA.</text>
</comment>
<comment type="catalytic activity">
    <reaction evidence="1">
        <text>cytidine(2498) in 23S rRNA + S-adenosyl-L-methionine = 2'-O-methylcytidine(2498) in 23S rRNA + S-adenosyl-L-homocysteine + H(+)</text>
        <dbReference type="Rhea" id="RHEA:42788"/>
        <dbReference type="Rhea" id="RHEA-COMP:10244"/>
        <dbReference type="Rhea" id="RHEA-COMP:10245"/>
        <dbReference type="ChEBI" id="CHEBI:15378"/>
        <dbReference type="ChEBI" id="CHEBI:57856"/>
        <dbReference type="ChEBI" id="CHEBI:59789"/>
        <dbReference type="ChEBI" id="CHEBI:74495"/>
        <dbReference type="ChEBI" id="CHEBI:82748"/>
        <dbReference type="EC" id="2.1.1.186"/>
    </reaction>
</comment>
<comment type="subunit">
    <text evidence="1">Monomer.</text>
</comment>
<comment type="subcellular location">
    <subcellularLocation>
        <location evidence="1">Cytoplasm</location>
    </subcellularLocation>
</comment>
<comment type="similarity">
    <text evidence="1">Belongs to the class I-like SAM-binding methyltransferase superfamily. RNA methyltransferase RlmE family. RlmM subfamily.</text>
</comment>
<sequence length="357" mass="40315">MNTLFMHCRPGFEGEVCSEIADHAARLDVAGYAKARPDTACAEFICTEADGAERLMNGQRFDKLIFPRQWARGLFLELPETDRISVILAQLAAFPICGSLWLEVVDTNDGKELSNFCKKFEAPLRKALTQAGKLVDDPRKPRLLLTFKSGREVFLGLADADNSAMWPMGIPRLKFPREAPSRSTLKLEEAWHHFIPRDQWDERLSGDMTSVDLGAAPGGWTYQLVRRGMLVTAIDNGPMAESLMDTGLVQHLMADGFTYKPRQPVDWMVCDIVEKPARNAALLETWLGEGLCREAVVNLKLPMKQRYAEVRRLLDRIEEGFQARGVRVSIGCKQLYHDREEVTCHLRRLDVAKAARK</sequence>
<gene>
    <name evidence="1" type="primary">rlmM</name>
    <name type="ordered locus">Psyr_3403</name>
</gene>